<dbReference type="EC" id="2.1.3.2" evidence="1"/>
<dbReference type="EMBL" id="CP000912">
    <property type="protein sequence ID" value="ABY39584.1"/>
    <property type="molecule type" value="Genomic_DNA"/>
</dbReference>
<dbReference type="RefSeq" id="WP_002966034.1">
    <property type="nucleotide sequence ID" value="NC_010167.1"/>
</dbReference>
<dbReference type="SMR" id="A9WYR8"/>
<dbReference type="KEGG" id="bmt:BSUIS_B0596"/>
<dbReference type="HOGENOM" id="CLU_043846_2_0_5"/>
<dbReference type="UniPathway" id="UPA00070">
    <property type="reaction ID" value="UER00116"/>
</dbReference>
<dbReference type="PRO" id="PR:A9WYR8"/>
<dbReference type="Proteomes" id="UP000008545">
    <property type="component" value="Chromosome II"/>
</dbReference>
<dbReference type="GO" id="GO:0005829">
    <property type="term" value="C:cytosol"/>
    <property type="evidence" value="ECO:0007669"/>
    <property type="project" value="TreeGrafter"/>
</dbReference>
<dbReference type="GO" id="GO:0016597">
    <property type="term" value="F:amino acid binding"/>
    <property type="evidence" value="ECO:0007669"/>
    <property type="project" value="InterPro"/>
</dbReference>
<dbReference type="GO" id="GO:0004070">
    <property type="term" value="F:aspartate carbamoyltransferase activity"/>
    <property type="evidence" value="ECO:0007669"/>
    <property type="project" value="UniProtKB-UniRule"/>
</dbReference>
<dbReference type="GO" id="GO:0006207">
    <property type="term" value="P:'de novo' pyrimidine nucleobase biosynthetic process"/>
    <property type="evidence" value="ECO:0007669"/>
    <property type="project" value="InterPro"/>
</dbReference>
<dbReference type="GO" id="GO:0044205">
    <property type="term" value="P:'de novo' UMP biosynthetic process"/>
    <property type="evidence" value="ECO:0007669"/>
    <property type="project" value="UniProtKB-UniRule"/>
</dbReference>
<dbReference type="GO" id="GO:0006520">
    <property type="term" value="P:amino acid metabolic process"/>
    <property type="evidence" value="ECO:0007669"/>
    <property type="project" value="InterPro"/>
</dbReference>
<dbReference type="FunFam" id="3.40.50.1370:FF:000007">
    <property type="entry name" value="Aspartate carbamoyltransferase"/>
    <property type="match status" value="1"/>
</dbReference>
<dbReference type="Gene3D" id="3.40.50.1370">
    <property type="entry name" value="Aspartate/ornithine carbamoyltransferase"/>
    <property type="match status" value="2"/>
</dbReference>
<dbReference type="HAMAP" id="MF_00001">
    <property type="entry name" value="Asp_carb_tr"/>
    <property type="match status" value="1"/>
</dbReference>
<dbReference type="InterPro" id="IPR006132">
    <property type="entry name" value="Asp/Orn_carbamoyltranf_P-bd"/>
</dbReference>
<dbReference type="InterPro" id="IPR006130">
    <property type="entry name" value="Asp/Orn_carbamoylTrfase"/>
</dbReference>
<dbReference type="InterPro" id="IPR036901">
    <property type="entry name" value="Asp/Orn_carbamoylTrfase_sf"/>
</dbReference>
<dbReference type="InterPro" id="IPR002082">
    <property type="entry name" value="Asp_carbamoyltransf"/>
</dbReference>
<dbReference type="InterPro" id="IPR006131">
    <property type="entry name" value="Asp_carbamoyltransf_Asp/Orn-bd"/>
</dbReference>
<dbReference type="NCBIfam" id="TIGR00670">
    <property type="entry name" value="asp_carb_tr"/>
    <property type="match status" value="1"/>
</dbReference>
<dbReference type="NCBIfam" id="NF002032">
    <property type="entry name" value="PRK00856.1"/>
    <property type="match status" value="1"/>
</dbReference>
<dbReference type="PANTHER" id="PTHR45753:SF6">
    <property type="entry name" value="ASPARTATE CARBAMOYLTRANSFERASE"/>
    <property type="match status" value="1"/>
</dbReference>
<dbReference type="PANTHER" id="PTHR45753">
    <property type="entry name" value="ORNITHINE CARBAMOYLTRANSFERASE, MITOCHONDRIAL"/>
    <property type="match status" value="1"/>
</dbReference>
<dbReference type="Pfam" id="PF00185">
    <property type="entry name" value="OTCace"/>
    <property type="match status" value="1"/>
</dbReference>
<dbReference type="Pfam" id="PF02729">
    <property type="entry name" value="OTCace_N"/>
    <property type="match status" value="1"/>
</dbReference>
<dbReference type="PRINTS" id="PR00100">
    <property type="entry name" value="AOTCASE"/>
</dbReference>
<dbReference type="PRINTS" id="PR00101">
    <property type="entry name" value="ATCASE"/>
</dbReference>
<dbReference type="SUPFAM" id="SSF53671">
    <property type="entry name" value="Aspartate/ornithine carbamoyltransferase"/>
    <property type="match status" value="1"/>
</dbReference>
<dbReference type="PROSITE" id="PS00097">
    <property type="entry name" value="CARBAMOYLTRANSFERASE"/>
    <property type="match status" value="1"/>
</dbReference>
<keyword id="KW-0665">Pyrimidine biosynthesis</keyword>
<keyword id="KW-0808">Transferase</keyword>
<organism>
    <name type="scientific">Brucella suis (strain ATCC 23445 / NCTC 10510)</name>
    <dbReference type="NCBI Taxonomy" id="470137"/>
    <lineage>
        <taxon>Bacteria</taxon>
        <taxon>Pseudomonadati</taxon>
        <taxon>Pseudomonadota</taxon>
        <taxon>Alphaproteobacteria</taxon>
        <taxon>Hyphomicrobiales</taxon>
        <taxon>Brucellaceae</taxon>
        <taxon>Brucella/Ochrobactrum group</taxon>
        <taxon>Brucella</taxon>
    </lineage>
</organism>
<sequence>MTNQTVSPLFPHRHLLGIKGLSPLDILCLLDLADQEIAVSRQPEKKKSVLRGRTQINLFFEASTRTQSSFELAGKRLGADVMNMSVGNSSVKKGETLIDTAMTLNAMQPDILVIRHASAGAAALLAQKVGCSVVNAGDGAHEHPTQALLDALTIRRAKGQIENLIVAICGDVLHSRVARSNILLLNALGARVRVVAPSTLLPAGMADMSVEVFNSMEEGLKDADVVMMLRLQRERMAGSFVPSVREYFHFYGLDREKLKFAKPDALVMHPGPMNRGVEIASDVADGPQSVIQQQVEMGVAVRMAVMEALLDPRRNPGNGEPA</sequence>
<feature type="chain" id="PRO_1000073722" description="Aspartate carbamoyltransferase catalytic subunit">
    <location>
        <begin position="1"/>
        <end position="322"/>
    </location>
</feature>
<feature type="binding site" evidence="1">
    <location>
        <position position="65"/>
    </location>
    <ligand>
        <name>carbamoyl phosphate</name>
        <dbReference type="ChEBI" id="CHEBI:58228"/>
    </ligand>
</feature>
<feature type="binding site" evidence="1">
    <location>
        <position position="66"/>
    </location>
    <ligand>
        <name>carbamoyl phosphate</name>
        <dbReference type="ChEBI" id="CHEBI:58228"/>
    </ligand>
</feature>
<feature type="binding site" evidence="1">
    <location>
        <position position="93"/>
    </location>
    <ligand>
        <name>L-aspartate</name>
        <dbReference type="ChEBI" id="CHEBI:29991"/>
    </ligand>
</feature>
<feature type="binding site" evidence="1">
    <location>
        <position position="115"/>
    </location>
    <ligand>
        <name>carbamoyl phosphate</name>
        <dbReference type="ChEBI" id="CHEBI:58228"/>
    </ligand>
</feature>
<feature type="binding site" evidence="1">
    <location>
        <position position="143"/>
    </location>
    <ligand>
        <name>carbamoyl phosphate</name>
        <dbReference type="ChEBI" id="CHEBI:58228"/>
    </ligand>
</feature>
<feature type="binding site" evidence="1">
    <location>
        <position position="146"/>
    </location>
    <ligand>
        <name>carbamoyl phosphate</name>
        <dbReference type="ChEBI" id="CHEBI:58228"/>
    </ligand>
</feature>
<feature type="binding site" evidence="1">
    <location>
        <position position="176"/>
    </location>
    <ligand>
        <name>L-aspartate</name>
        <dbReference type="ChEBI" id="CHEBI:29991"/>
    </ligand>
</feature>
<feature type="binding site" evidence="1">
    <location>
        <position position="230"/>
    </location>
    <ligand>
        <name>L-aspartate</name>
        <dbReference type="ChEBI" id="CHEBI:29991"/>
    </ligand>
</feature>
<feature type="binding site" evidence="1">
    <location>
        <position position="271"/>
    </location>
    <ligand>
        <name>carbamoyl phosphate</name>
        <dbReference type="ChEBI" id="CHEBI:58228"/>
    </ligand>
</feature>
<feature type="binding site" evidence="1">
    <location>
        <position position="272"/>
    </location>
    <ligand>
        <name>carbamoyl phosphate</name>
        <dbReference type="ChEBI" id="CHEBI:58228"/>
    </ligand>
</feature>
<reference key="1">
    <citation type="submission" date="2007-12" db="EMBL/GenBank/DDBJ databases">
        <title>Brucella suis ATCC 23445 whole genome shotgun sequencing project.</title>
        <authorList>
            <person name="Setubal J.C."/>
            <person name="Bowns C."/>
            <person name="Boyle S."/>
            <person name="Crasta O.R."/>
            <person name="Czar M.J."/>
            <person name="Dharmanolla C."/>
            <person name="Gillespie J.J."/>
            <person name="Kenyon R.W."/>
            <person name="Lu J."/>
            <person name="Mane S."/>
            <person name="Mohapatra S."/>
            <person name="Nagrani S."/>
            <person name="Purkayastha A."/>
            <person name="Rajasimha H.K."/>
            <person name="Shallom J.M."/>
            <person name="Shallom S."/>
            <person name="Shukla M."/>
            <person name="Snyder E.E."/>
            <person name="Sobral B.W."/>
            <person name="Wattam A.R."/>
            <person name="Will R."/>
            <person name="Williams K."/>
            <person name="Yoo H."/>
            <person name="Bruce D."/>
            <person name="Detter C."/>
            <person name="Munk C."/>
            <person name="Brettin T.S."/>
        </authorList>
    </citation>
    <scope>NUCLEOTIDE SEQUENCE [LARGE SCALE GENOMIC DNA]</scope>
    <source>
        <strain>ATCC 23445 / NCTC 10510</strain>
    </source>
</reference>
<protein>
    <recommendedName>
        <fullName evidence="1">Aspartate carbamoyltransferase catalytic subunit</fullName>
        <ecNumber evidence="1">2.1.3.2</ecNumber>
    </recommendedName>
    <alternativeName>
        <fullName evidence="1">Aspartate transcarbamylase</fullName>
        <shortName evidence="1">ATCase</shortName>
    </alternativeName>
</protein>
<comment type="function">
    <text evidence="1">Catalyzes the condensation of carbamoyl phosphate and aspartate to form carbamoyl aspartate and inorganic phosphate, the committed step in the de novo pyrimidine nucleotide biosynthesis pathway.</text>
</comment>
<comment type="catalytic activity">
    <reaction evidence="1">
        <text>carbamoyl phosphate + L-aspartate = N-carbamoyl-L-aspartate + phosphate + H(+)</text>
        <dbReference type="Rhea" id="RHEA:20013"/>
        <dbReference type="ChEBI" id="CHEBI:15378"/>
        <dbReference type="ChEBI" id="CHEBI:29991"/>
        <dbReference type="ChEBI" id="CHEBI:32814"/>
        <dbReference type="ChEBI" id="CHEBI:43474"/>
        <dbReference type="ChEBI" id="CHEBI:58228"/>
        <dbReference type="EC" id="2.1.3.2"/>
    </reaction>
</comment>
<comment type="pathway">
    <text evidence="1">Pyrimidine metabolism; UMP biosynthesis via de novo pathway; (S)-dihydroorotate from bicarbonate: step 2/3.</text>
</comment>
<comment type="subunit">
    <text evidence="1">Heterododecamer (2C3:3R2) of six catalytic PyrB chains organized as two trimers (C3), and six regulatory PyrI chains organized as three dimers (R2).</text>
</comment>
<comment type="similarity">
    <text evidence="1">Belongs to the aspartate/ornithine carbamoyltransferase superfamily. ATCase family.</text>
</comment>
<name>PYRB_BRUSI</name>
<evidence type="ECO:0000255" key="1">
    <source>
        <dbReference type="HAMAP-Rule" id="MF_00001"/>
    </source>
</evidence>
<accession>A9WYR8</accession>
<proteinExistence type="inferred from homology"/>
<gene>
    <name evidence="1" type="primary">pyrB</name>
    <name type="ordered locus">BSUIS_B0596</name>
</gene>